<evidence type="ECO:0000250" key="1">
    <source>
        <dbReference type="UniProtKB" id="P07143"/>
    </source>
</evidence>
<evidence type="ECO:0000255" key="2"/>
<evidence type="ECO:0000269" key="3">
    <source>
    </source>
</evidence>
<evidence type="ECO:0000305" key="4"/>
<name>CY1_EUGGR</name>
<organism>
    <name type="scientific">Euglena gracilis</name>
    <dbReference type="NCBI Taxonomy" id="3039"/>
    <lineage>
        <taxon>Eukaryota</taxon>
        <taxon>Discoba</taxon>
        <taxon>Euglenozoa</taxon>
        <taxon>Euglenida</taxon>
        <taxon>Spirocuta</taxon>
        <taxon>Euglenophyceae</taxon>
        <taxon>Euglenales</taxon>
        <taxon>Euglenaceae</taxon>
        <taxon>Euglena</taxon>
    </lineage>
</organism>
<comment type="function">
    <text evidence="1">Component of the ubiquinol-cytochrome c oxidoreductase, a multisubunit transmembrane complex that is part of the mitochondrial electron transport chain which drives oxidative phosphorylation. The respiratory chain contains 3 multisubunit complexes succinate dehydrogenase (complex II, CII), ubiquinol-cytochrome c oxidoreductase (cytochrome b-c1 complex, complex III, CIII) and cytochrome c oxidase (complex IV, CIV), that cooperate to transfer electrons derived from NADH and succinate to molecular oxygen, creating an electrochemical gradient over the inner membrane that drives transmembrane transport and the ATP synthase. The cytochrome b-c1 complex catalyzes electron transfer from ubiquinol to cytochrome c, linking this redox reaction to translocation of protons across the mitochondrial inner membrane, with protons being carried across the membrane as hydrogens on the quinol. In the process called Q cycle, 2 protons are consumed from the matrix, 4 protons are released into the intermembrane space and 2 electrons are passed to cytochrome c. Cytochrome c1 is a catalytic core subunit containing a c-type heme. It transfers electrons from the [2Fe-2S] iron-sulfur cluster of the Rieske protein to cytochrome c.</text>
</comment>
<comment type="catalytic activity">
    <reaction evidence="1">
        <text>a quinol + 2 Fe(III)-[cytochrome c](out) = a quinone + 2 Fe(II)-[cytochrome c](out) + 2 H(+)(out)</text>
        <dbReference type="Rhea" id="RHEA:11484"/>
        <dbReference type="Rhea" id="RHEA-COMP:10350"/>
        <dbReference type="Rhea" id="RHEA-COMP:14399"/>
        <dbReference type="ChEBI" id="CHEBI:15378"/>
        <dbReference type="ChEBI" id="CHEBI:24646"/>
        <dbReference type="ChEBI" id="CHEBI:29033"/>
        <dbReference type="ChEBI" id="CHEBI:29034"/>
        <dbReference type="ChEBI" id="CHEBI:132124"/>
        <dbReference type="EC" id="7.1.1.8"/>
    </reaction>
</comment>
<comment type="cofactor">
    <cofactor evidence="1">
        <name>heme</name>
        <dbReference type="ChEBI" id="CHEBI:30413"/>
    </cofactor>
    <text evidence="1">Binds 1 heme group covalently per subunit.</text>
</comment>
<comment type="subunit">
    <text evidence="1">Component of the ubiquinol-cytochrome c oxidoreductase (cytochrome b-c1 complex, complex III, CIII), a multisubunit enzyme composed of 3 respiratory subunits cytochrome b, cytochrome c1 and Rieske protein, 2 core protein subunits, and additional low-molecular weight protein subunits. The complex exists as an obligatory dimer and forms supercomplexes (SCs) in the inner mitochondrial membrane with cytochrome c oxidase (complex IV, CIV).</text>
</comment>
<comment type="subcellular location">
    <subcellularLocation>
        <location evidence="1">Mitochondrion inner membrane</location>
        <topology evidence="1">Single-pass membrane protein</topology>
    </subcellularLocation>
</comment>
<comment type="miscellaneous">
    <text>This cytochrome c1 is unusual, its alpha-band exists at 561 nm instead at 553 nm.</text>
</comment>
<comment type="similarity">
    <text evidence="4">Belongs to the cytochrome c family.</text>
</comment>
<feature type="chain" id="PRO_0000108417" description="Cytochrome c1, heme protein">
    <location>
        <begin position="1"/>
        <end position="243"/>
    </location>
</feature>
<feature type="topological domain" description="Mitochondrial intermembrane" evidence="1">
    <location>
        <begin position="1"/>
        <end position="201"/>
    </location>
</feature>
<feature type="transmembrane region" description="Helical" evidence="2">
    <location>
        <begin position="202"/>
        <end position="221"/>
    </location>
</feature>
<feature type="topological domain" description="Mitochondrial matrix" evidence="1">
    <location>
        <begin position="222"/>
        <end position="243"/>
    </location>
</feature>
<feature type="domain" description="Cytochrome c">
    <location>
        <begin position="5"/>
        <end position="194"/>
    </location>
</feature>
<feature type="binding site" description="covalent" evidence="3">
    <location>
        <position position="39"/>
    </location>
    <ligand>
        <name>heme</name>
        <dbReference type="ChEBI" id="CHEBI:30413"/>
    </ligand>
</feature>
<feature type="binding site" description="axial binding residue" evidence="1">
    <location>
        <position position="40"/>
    </location>
    <ligand>
        <name>heme</name>
        <dbReference type="ChEBI" id="CHEBI:30413"/>
    </ligand>
    <ligandPart>
        <name>Fe</name>
        <dbReference type="ChEBI" id="CHEBI:18248"/>
    </ligandPart>
</feature>
<feature type="binding site" description="axial binding residue" evidence="1">
    <location>
        <position position="159"/>
    </location>
    <ligand>
        <name>heme</name>
        <dbReference type="ChEBI" id="CHEBI:30413"/>
    </ligand>
    <ligandPart>
        <name>Fe</name>
        <dbReference type="ChEBI" id="CHEBI:18248"/>
    </ligandPart>
</feature>
<protein>
    <recommendedName>
        <fullName>Cytochrome c1, heme protein</fullName>
        <ecNumber>7.1.1.8</ecNumber>
    </recommendedName>
    <alternativeName>
        <fullName>Complex III subunit 4</fullName>
    </alternativeName>
    <alternativeName>
        <fullName>Complex III subunit IV</fullName>
    </alternativeName>
    <alternativeName>
        <fullName>Cytochrome b-c1 complex subunit 4</fullName>
    </alternativeName>
    <alternativeName>
        <fullName>Ubiquinol-cytochrome-c reductase complex cytochrome c1 subunit</fullName>
        <shortName>Cytochrome c-1</shortName>
    </alternativeName>
</protein>
<dbReference type="EC" id="7.1.1.8"/>
<dbReference type="PIR" id="JQ0021">
    <property type="entry name" value="JQ0021"/>
</dbReference>
<dbReference type="PDB" id="8IUF">
    <property type="method" value="EM"/>
    <property type="resolution" value="2.81 A"/>
    <property type="chains" value="QD/Qd=1-243"/>
</dbReference>
<dbReference type="PDB" id="8IUJ">
    <property type="method" value="EM"/>
    <property type="resolution" value="3.06 A"/>
    <property type="chains" value="QD/Qd=1-243"/>
</dbReference>
<dbReference type="PDBsum" id="8IUF"/>
<dbReference type="PDBsum" id="8IUJ"/>
<dbReference type="EMDB" id="EMD-35720"/>
<dbReference type="EMDB" id="EMD-35723"/>
<dbReference type="SMR" id="P20114"/>
<dbReference type="GO" id="GO:0005743">
    <property type="term" value="C:mitochondrial inner membrane"/>
    <property type="evidence" value="ECO:0007669"/>
    <property type="project" value="UniProtKB-SubCell"/>
</dbReference>
<dbReference type="GO" id="GO:0020037">
    <property type="term" value="F:heme binding"/>
    <property type="evidence" value="ECO:0007669"/>
    <property type="project" value="InterPro"/>
</dbReference>
<dbReference type="GO" id="GO:0046872">
    <property type="term" value="F:metal ion binding"/>
    <property type="evidence" value="ECO:0007669"/>
    <property type="project" value="UniProtKB-KW"/>
</dbReference>
<dbReference type="GO" id="GO:0008121">
    <property type="term" value="F:ubiquinol-cytochrome-c reductase activity"/>
    <property type="evidence" value="ECO:0007669"/>
    <property type="project" value="UniProtKB-EC"/>
</dbReference>
<dbReference type="GO" id="GO:0006122">
    <property type="term" value="P:mitochondrial electron transport, ubiquinol to cytochrome c"/>
    <property type="evidence" value="ECO:0007669"/>
    <property type="project" value="TreeGrafter"/>
</dbReference>
<dbReference type="Gene3D" id="1.10.760.10">
    <property type="entry name" value="Cytochrome c-like domain"/>
    <property type="match status" value="1"/>
</dbReference>
<dbReference type="Gene3D" id="1.20.5.100">
    <property type="entry name" value="Cytochrome c1, transmembrane anchor, C-terminal"/>
    <property type="match status" value="1"/>
</dbReference>
<dbReference type="InterPro" id="IPR036909">
    <property type="entry name" value="Cyt_c-like_dom_sf"/>
</dbReference>
<dbReference type="InterPro" id="IPR002326">
    <property type="entry name" value="Cyt_c1"/>
</dbReference>
<dbReference type="InterPro" id="IPR021157">
    <property type="entry name" value="Cyt_c1_TM_anchor_C"/>
</dbReference>
<dbReference type="PANTHER" id="PTHR10266">
    <property type="entry name" value="CYTOCHROME C1"/>
    <property type="match status" value="1"/>
</dbReference>
<dbReference type="PANTHER" id="PTHR10266:SF3">
    <property type="entry name" value="CYTOCHROME C1, HEME PROTEIN, MITOCHONDRIAL"/>
    <property type="match status" value="1"/>
</dbReference>
<dbReference type="Pfam" id="PF02167">
    <property type="entry name" value="Cytochrom_C1"/>
    <property type="match status" value="1"/>
</dbReference>
<dbReference type="PRINTS" id="PR00603">
    <property type="entry name" value="CYTOCHROMEC1"/>
</dbReference>
<dbReference type="SUPFAM" id="SSF46626">
    <property type="entry name" value="Cytochrome c"/>
    <property type="match status" value="1"/>
</dbReference>
<dbReference type="SUPFAM" id="SSF81496">
    <property type="entry name" value="Cytochrome c1 subunit of cytochrome bc1 complex (Ubiquinol-cytochrome c reductase), transmembrane anchor"/>
    <property type="match status" value="1"/>
</dbReference>
<keyword id="KW-0002">3D-structure</keyword>
<keyword id="KW-0903">Direct protein sequencing</keyword>
<keyword id="KW-0249">Electron transport</keyword>
<keyword id="KW-0349">Heme</keyword>
<keyword id="KW-0408">Iron</keyword>
<keyword id="KW-0472">Membrane</keyword>
<keyword id="KW-0479">Metal-binding</keyword>
<keyword id="KW-0496">Mitochondrion</keyword>
<keyword id="KW-0999">Mitochondrion inner membrane</keyword>
<keyword id="KW-0679">Respiratory chain</keyword>
<keyword id="KW-1278">Translocase</keyword>
<keyword id="KW-0812">Transmembrane</keyword>
<keyword id="KW-1133">Transmembrane helix</keyword>
<keyword id="KW-0813">Transport</keyword>
<proteinExistence type="evidence at protein level"/>
<sequence>GVDSHPPALPWPHFQWFQGLDWRSVRRGKEVYEQVFAPCHSLSFIKYRHFEAFMSKEEVKNMAASFEVDDDPDEKGEARKRPGKRFDTVVQPYKNEQEARYANNGALPPDLSVITNARHGGVDYIYALLTGYGRPVPGGVQLSTTQWYNPYFHGGIIGMPPPLTDDMIEYEDGTPASVPQMAKDVTCFLEWCSNPWWDERKLLGYKTIATLAVIAVSSGYYNRFLSGLWRSRRLAFRPFNYSK</sequence>
<accession>P20114</accession>
<reference key="1">
    <citation type="journal article" date="1989" name="J. Biochem.">
        <title>Molecular cloning and nucleotide sequence of a cDNA encoding Euglena gracilis cytochrome c1.</title>
        <authorList>
            <person name="Mukai K."/>
            <person name="Wakabayashi S."/>
            <person name="Matsubara H."/>
        </authorList>
    </citation>
    <scope>NUCLEOTIDE SEQUENCE [MRNA]</scope>
    <scope>PARTIAL PROTEIN SEQUENCE</scope>
    <source>
        <strain>SM-ZK</strain>
    </source>
</reference>
<reference key="2">
    <citation type="journal article" date="1989" name="Eur. J. Biochem.">
        <title>An atypical heme-binding structure of cytochrome c1 of Euglena gracilis mitochondrial complex III.</title>
        <authorList>
            <person name="Mukai K."/>
            <person name="Toyosaki H."/>
            <person name="Yoshida M."/>
            <person name="Yao Y."/>
            <person name="Wakabayashi S."/>
            <person name="Matsubara H."/>
        </authorList>
    </citation>
    <scope>HEME-BINDING PEPTIDE</scope>
</reference>